<keyword id="KW-0255">Endonuclease</keyword>
<keyword id="KW-0378">Hydrolase</keyword>
<keyword id="KW-0479">Metal-binding</keyword>
<keyword id="KW-0540">Nuclease</keyword>
<keyword id="KW-1185">Reference proteome</keyword>
<keyword id="KW-0819">tRNA processing</keyword>
<keyword id="KW-0862">Zinc</keyword>
<feature type="chain" id="PRO_1000187975" description="Ribonuclease Z">
    <location>
        <begin position="1"/>
        <end position="319"/>
    </location>
</feature>
<feature type="active site" description="Proton acceptor" evidence="1">
    <location>
        <position position="66"/>
    </location>
</feature>
<feature type="binding site" evidence="1">
    <location>
        <position position="62"/>
    </location>
    <ligand>
        <name>Zn(2+)</name>
        <dbReference type="ChEBI" id="CHEBI:29105"/>
        <label>1</label>
        <note>catalytic</note>
    </ligand>
</feature>
<feature type="binding site" evidence="1">
    <location>
        <position position="64"/>
    </location>
    <ligand>
        <name>Zn(2+)</name>
        <dbReference type="ChEBI" id="CHEBI:29105"/>
        <label>1</label>
        <note>catalytic</note>
    </ligand>
</feature>
<feature type="binding site" evidence="1">
    <location>
        <position position="66"/>
    </location>
    <ligand>
        <name>Zn(2+)</name>
        <dbReference type="ChEBI" id="CHEBI:29105"/>
        <label>2</label>
        <note>catalytic</note>
    </ligand>
</feature>
<feature type="binding site" evidence="1">
    <location>
        <position position="67"/>
    </location>
    <ligand>
        <name>Zn(2+)</name>
        <dbReference type="ChEBI" id="CHEBI:29105"/>
        <label>2</label>
        <note>catalytic</note>
    </ligand>
</feature>
<feature type="binding site" evidence="1">
    <location>
        <position position="139"/>
    </location>
    <ligand>
        <name>Zn(2+)</name>
        <dbReference type="ChEBI" id="CHEBI:29105"/>
        <label>1</label>
        <note>catalytic</note>
    </ligand>
</feature>
<feature type="binding site" evidence="1">
    <location>
        <position position="210"/>
    </location>
    <ligand>
        <name>Zn(2+)</name>
        <dbReference type="ChEBI" id="CHEBI:29105"/>
        <label>1</label>
        <note>catalytic</note>
    </ligand>
</feature>
<feature type="binding site" evidence="1">
    <location>
        <position position="210"/>
    </location>
    <ligand>
        <name>Zn(2+)</name>
        <dbReference type="ChEBI" id="CHEBI:29105"/>
        <label>2</label>
        <note>catalytic</note>
    </ligand>
</feature>
<feature type="binding site" evidence="1">
    <location>
        <position position="268"/>
    </location>
    <ligand>
        <name>Zn(2+)</name>
        <dbReference type="ChEBI" id="CHEBI:29105"/>
        <label>2</label>
        <note>catalytic</note>
    </ligand>
</feature>
<sequence>MQITFLGTSSGVPTRSRNVSSVALRLPQRAELWLFDCGEGTQHQIMRSELKISQLSRIFITHMHGDHIFGLMGLLATCGLAGNVERIDIYGPPGLNDYIQSASRYSYTHFSYPIKVHAIRPGVIYEDDYFTVSCGNLHHRITAFGYRVAEKDRTGRFDVEKAKALDIPSGRIYGQLKRGETVILDDGRVIDGTQLCGPTEIGRKIAYCTDTIYCDGAVELAHDADVLIHEATFAHQDADMAFQRLHSTTTMAAQTALAAGAHRLIMSHFSPRYAPGNTLELKDLLKEARAIFPRTDMAYDFMIHEVPRRREVELTKVGV</sequence>
<dbReference type="EC" id="3.1.26.11" evidence="1"/>
<dbReference type="EMBL" id="CP001037">
    <property type="protein sequence ID" value="ACC83577.1"/>
    <property type="molecule type" value="Genomic_DNA"/>
</dbReference>
<dbReference type="RefSeq" id="WP_012411529.1">
    <property type="nucleotide sequence ID" value="NC_010628.1"/>
</dbReference>
<dbReference type="SMR" id="B2J3C7"/>
<dbReference type="STRING" id="63737.Npun_R5251"/>
<dbReference type="EnsemblBacteria" id="ACC83577">
    <property type="protein sequence ID" value="ACC83577"/>
    <property type="gene ID" value="Npun_R5251"/>
</dbReference>
<dbReference type="KEGG" id="npu:Npun_R5251"/>
<dbReference type="eggNOG" id="COG1234">
    <property type="taxonomic scope" value="Bacteria"/>
</dbReference>
<dbReference type="HOGENOM" id="CLU_031317_2_0_3"/>
<dbReference type="OrthoDB" id="9800940at2"/>
<dbReference type="PhylomeDB" id="B2J3C7"/>
<dbReference type="Proteomes" id="UP000001191">
    <property type="component" value="Chromosome"/>
</dbReference>
<dbReference type="GO" id="GO:0042781">
    <property type="term" value="F:3'-tRNA processing endoribonuclease activity"/>
    <property type="evidence" value="ECO:0007669"/>
    <property type="project" value="UniProtKB-UniRule"/>
</dbReference>
<dbReference type="GO" id="GO:0008270">
    <property type="term" value="F:zinc ion binding"/>
    <property type="evidence" value="ECO:0007669"/>
    <property type="project" value="UniProtKB-UniRule"/>
</dbReference>
<dbReference type="CDD" id="cd07717">
    <property type="entry name" value="RNaseZ_ZiPD-like_MBL-fold"/>
    <property type="match status" value="1"/>
</dbReference>
<dbReference type="FunFam" id="3.60.15.10:FF:000002">
    <property type="entry name" value="Ribonuclease Z"/>
    <property type="match status" value="1"/>
</dbReference>
<dbReference type="Gene3D" id="3.60.15.10">
    <property type="entry name" value="Ribonuclease Z/Hydroxyacylglutathione hydrolase-like"/>
    <property type="match status" value="1"/>
</dbReference>
<dbReference type="HAMAP" id="MF_01818">
    <property type="entry name" value="RNase_Z_BN"/>
    <property type="match status" value="1"/>
</dbReference>
<dbReference type="InterPro" id="IPR001279">
    <property type="entry name" value="Metallo-B-lactamas"/>
</dbReference>
<dbReference type="InterPro" id="IPR036866">
    <property type="entry name" value="RibonucZ/Hydroxyglut_hydro"/>
</dbReference>
<dbReference type="InterPro" id="IPR013471">
    <property type="entry name" value="RNase_Z/BN"/>
</dbReference>
<dbReference type="NCBIfam" id="NF000801">
    <property type="entry name" value="PRK00055.1-3"/>
    <property type="match status" value="1"/>
</dbReference>
<dbReference type="NCBIfam" id="TIGR02651">
    <property type="entry name" value="RNase_Z"/>
    <property type="match status" value="1"/>
</dbReference>
<dbReference type="PANTHER" id="PTHR46018">
    <property type="entry name" value="ZINC PHOSPHODIESTERASE ELAC PROTEIN 1"/>
    <property type="match status" value="1"/>
</dbReference>
<dbReference type="PANTHER" id="PTHR46018:SF2">
    <property type="entry name" value="ZINC PHOSPHODIESTERASE ELAC PROTEIN 1"/>
    <property type="match status" value="1"/>
</dbReference>
<dbReference type="Pfam" id="PF00753">
    <property type="entry name" value="Lactamase_B"/>
    <property type="match status" value="1"/>
</dbReference>
<dbReference type="Pfam" id="PF12706">
    <property type="entry name" value="Lactamase_B_2"/>
    <property type="match status" value="1"/>
</dbReference>
<dbReference type="SUPFAM" id="SSF56281">
    <property type="entry name" value="Metallo-hydrolase/oxidoreductase"/>
    <property type="match status" value="1"/>
</dbReference>
<protein>
    <recommendedName>
        <fullName evidence="1">Ribonuclease Z</fullName>
        <shortName evidence="1">RNase Z</shortName>
        <ecNumber evidence="1">3.1.26.11</ecNumber>
    </recommendedName>
    <alternativeName>
        <fullName evidence="1">tRNA 3 endonuclease</fullName>
    </alternativeName>
    <alternativeName>
        <fullName evidence="1">tRNase Z</fullName>
    </alternativeName>
</protein>
<evidence type="ECO:0000255" key="1">
    <source>
        <dbReference type="HAMAP-Rule" id="MF_01818"/>
    </source>
</evidence>
<proteinExistence type="inferred from homology"/>
<accession>B2J3C7</accession>
<comment type="function">
    <text evidence="1">Zinc phosphodiesterase, which displays some tRNA 3'-processing endonuclease activity. Probably involved in tRNA maturation, by removing a 3'-trailer from precursor tRNA.</text>
</comment>
<comment type="catalytic activity">
    <reaction evidence="1">
        <text>Endonucleolytic cleavage of RNA, removing extra 3' nucleotides from tRNA precursor, generating 3' termini of tRNAs. A 3'-hydroxy group is left at the tRNA terminus and a 5'-phosphoryl group is left at the trailer molecule.</text>
        <dbReference type="EC" id="3.1.26.11"/>
    </reaction>
</comment>
<comment type="cofactor">
    <cofactor evidence="1">
        <name>Zn(2+)</name>
        <dbReference type="ChEBI" id="CHEBI:29105"/>
    </cofactor>
    <text evidence="1">Binds 2 Zn(2+) ions.</text>
</comment>
<comment type="subunit">
    <text evidence="1">Homodimer.</text>
</comment>
<comment type="similarity">
    <text evidence="1">Belongs to the RNase Z family.</text>
</comment>
<name>RNZ_NOSP7</name>
<gene>
    <name evidence="1" type="primary">rnz</name>
    <name type="ordered locus">Npun_R5251</name>
</gene>
<organism>
    <name type="scientific">Nostoc punctiforme (strain ATCC 29133 / PCC 73102)</name>
    <dbReference type="NCBI Taxonomy" id="63737"/>
    <lineage>
        <taxon>Bacteria</taxon>
        <taxon>Bacillati</taxon>
        <taxon>Cyanobacteriota</taxon>
        <taxon>Cyanophyceae</taxon>
        <taxon>Nostocales</taxon>
        <taxon>Nostocaceae</taxon>
        <taxon>Nostoc</taxon>
    </lineage>
</organism>
<reference key="1">
    <citation type="journal article" date="2013" name="Plant Physiol.">
        <title>A Nostoc punctiforme Sugar Transporter Necessary to Establish a Cyanobacterium-Plant Symbiosis.</title>
        <authorList>
            <person name="Ekman M."/>
            <person name="Picossi S."/>
            <person name="Campbell E.L."/>
            <person name="Meeks J.C."/>
            <person name="Flores E."/>
        </authorList>
    </citation>
    <scope>NUCLEOTIDE SEQUENCE [LARGE SCALE GENOMIC DNA]</scope>
    <source>
        <strain>ATCC 29133 / PCC 73102</strain>
    </source>
</reference>